<organism>
    <name type="scientific">Bifidobacterium longum (strain NCC 2705)</name>
    <dbReference type="NCBI Taxonomy" id="206672"/>
    <lineage>
        <taxon>Bacteria</taxon>
        <taxon>Bacillati</taxon>
        <taxon>Actinomycetota</taxon>
        <taxon>Actinomycetes</taxon>
        <taxon>Bifidobacteriales</taxon>
        <taxon>Bifidobacteriaceae</taxon>
        <taxon>Bifidobacterium</taxon>
    </lineage>
</organism>
<gene>
    <name evidence="1" type="primary">glyQS</name>
    <name type="synonym">glyS</name>
    <name type="ordered locus">BL0116</name>
</gene>
<comment type="function">
    <text evidence="1">Catalyzes the attachment of glycine to tRNA(Gly).</text>
</comment>
<comment type="catalytic activity">
    <reaction evidence="1">
        <text>tRNA(Gly) + glycine + ATP = glycyl-tRNA(Gly) + AMP + diphosphate</text>
        <dbReference type="Rhea" id="RHEA:16013"/>
        <dbReference type="Rhea" id="RHEA-COMP:9664"/>
        <dbReference type="Rhea" id="RHEA-COMP:9683"/>
        <dbReference type="ChEBI" id="CHEBI:30616"/>
        <dbReference type="ChEBI" id="CHEBI:33019"/>
        <dbReference type="ChEBI" id="CHEBI:57305"/>
        <dbReference type="ChEBI" id="CHEBI:78442"/>
        <dbReference type="ChEBI" id="CHEBI:78522"/>
        <dbReference type="ChEBI" id="CHEBI:456215"/>
        <dbReference type="EC" id="6.1.1.14"/>
    </reaction>
</comment>
<comment type="subunit">
    <text evidence="1">Homodimer.</text>
</comment>
<comment type="subcellular location">
    <subcellularLocation>
        <location evidence="1">Cytoplasm</location>
    </subcellularLocation>
</comment>
<comment type="similarity">
    <text evidence="1">Belongs to the class-II aminoacyl-tRNA synthetase family.</text>
</comment>
<proteinExistence type="inferred from homology"/>
<evidence type="ECO:0000255" key="1">
    <source>
        <dbReference type="HAMAP-Rule" id="MF_00253"/>
    </source>
</evidence>
<evidence type="ECO:0000256" key="2">
    <source>
        <dbReference type="SAM" id="MobiDB-lite"/>
    </source>
</evidence>
<protein>
    <recommendedName>
        <fullName evidence="1">Glycine--tRNA ligase</fullName>
        <ecNumber evidence="1">6.1.1.14</ecNumber>
    </recommendedName>
    <alternativeName>
        <fullName evidence="1">Glycyl-tRNA synthetase</fullName>
        <shortName evidence="1">GlyRS</shortName>
    </alternativeName>
</protein>
<reference key="1">
    <citation type="journal article" date="2002" name="Proc. Natl. Acad. Sci. U.S.A.">
        <title>The genome sequence of Bifidobacterium longum reflects its adaptation to the human gastrointestinal tract.</title>
        <authorList>
            <person name="Schell M.A."/>
            <person name="Karmirantzou M."/>
            <person name="Snel B."/>
            <person name="Vilanova D."/>
            <person name="Berger B."/>
            <person name="Pessi G."/>
            <person name="Zwahlen M.-C."/>
            <person name="Desiere F."/>
            <person name="Bork P."/>
            <person name="Delley M."/>
            <person name="Pridmore R.D."/>
            <person name="Arigoni F."/>
        </authorList>
    </citation>
    <scope>NUCLEOTIDE SEQUENCE [LARGE SCALE GENOMIC DNA]</scope>
    <source>
        <strain>NCC 2705</strain>
    </source>
</reference>
<name>SYG_BIFLO</name>
<feature type="chain" id="PRO_0000072948" description="Glycine--tRNA ligase">
    <location>
        <begin position="1"/>
        <end position="490"/>
    </location>
</feature>
<feature type="region of interest" description="Disordered" evidence="2">
    <location>
        <begin position="470"/>
        <end position="490"/>
    </location>
</feature>
<feature type="binding site" evidence="1">
    <location>
        <position position="99"/>
    </location>
    <ligand>
        <name>substrate</name>
    </ligand>
</feature>
<feature type="binding site" evidence="1">
    <location>
        <position position="163"/>
    </location>
    <ligand>
        <name>substrate</name>
    </ligand>
</feature>
<feature type="binding site" evidence="1">
    <location>
        <begin position="195"/>
        <end position="197"/>
    </location>
    <ligand>
        <name>ATP</name>
        <dbReference type="ChEBI" id="CHEBI:30616"/>
    </ligand>
</feature>
<feature type="binding site" evidence="1">
    <location>
        <begin position="205"/>
        <end position="210"/>
    </location>
    <ligand>
        <name>ATP</name>
        <dbReference type="ChEBI" id="CHEBI:30616"/>
    </ligand>
</feature>
<feature type="binding site" evidence="1">
    <location>
        <begin position="210"/>
        <end position="214"/>
    </location>
    <ligand>
        <name>substrate</name>
    </ligand>
</feature>
<feature type="binding site" evidence="1">
    <location>
        <begin position="282"/>
        <end position="283"/>
    </location>
    <ligand>
        <name>ATP</name>
        <dbReference type="ChEBI" id="CHEBI:30616"/>
    </ligand>
</feature>
<feature type="binding site" evidence="1">
    <location>
        <begin position="322"/>
        <end position="326"/>
    </location>
    <ligand>
        <name>substrate</name>
    </ligand>
</feature>
<feature type="binding site" evidence="1">
    <location>
        <begin position="326"/>
        <end position="329"/>
    </location>
    <ligand>
        <name>ATP</name>
        <dbReference type="ChEBI" id="CHEBI:30616"/>
    </ligand>
</feature>
<accession>Q8G7W9</accession>
<sequence>MAQSKLDEVVSLAKRRGFVFPAGEIYGGTRSAWDYGPLGVALKDNIKREWWRSMVVTRPDVVGVDTSIILPPEVWVASGHVSVFNDPLVECLNCHKRNRADKLEESYAEKHGDKMPENGMKDIVCPNCGIRGQWTEPRDFNMMLRTHLGPVEDENSLHYLRPETAQGIFVDFKNVMTSSRSRPPFGIANMGKSFRNEITPGNFIFRTREFEQMEMEFFVTPGTDEEWHQYWIDARTRWYIDLGVKPENLRHYEHPKEKLSHYSKRTVDIEYKFGFQGSDWGELEGIANRTDYDLSAHSKHSGEDLSYFNQATGEKYVPYVIEPAAGLTRSLMCFLVDAYDVDEAPNTKGGVDKRTVLRLDPRLAPVKAAVLPLSKKPELQTVAQNLADDLRFNEWMIDYDESGAIGRRYRRQDEIGTPLCITVDFDTLEDHAVTIRERDTMAQERVALDKVADYVAARIGEKRTRVPLKPVEMGGEPWPESGVQEAGGLY</sequence>
<keyword id="KW-0030">Aminoacyl-tRNA synthetase</keyword>
<keyword id="KW-0067">ATP-binding</keyword>
<keyword id="KW-0963">Cytoplasm</keyword>
<keyword id="KW-0436">Ligase</keyword>
<keyword id="KW-0547">Nucleotide-binding</keyword>
<keyword id="KW-0648">Protein biosynthesis</keyword>
<keyword id="KW-1185">Reference proteome</keyword>
<dbReference type="EC" id="6.1.1.14" evidence="1"/>
<dbReference type="EMBL" id="AE014295">
    <property type="protein sequence ID" value="AAN23981.1"/>
    <property type="molecule type" value="Genomic_DNA"/>
</dbReference>
<dbReference type="RefSeq" id="NP_695345.1">
    <property type="nucleotide sequence ID" value="NC_004307.2"/>
</dbReference>
<dbReference type="RefSeq" id="WP_011067967.1">
    <property type="nucleotide sequence ID" value="NC_004307.2"/>
</dbReference>
<dbReference type="SMR" id="Q8G7W9"/>
<dbReference type="STRING" id="206672.BL0116"/>
<dbReference type="EnsemblBacteria" id="AAN23981">
    <property type="protein sequence ID" value="AAN23981"/>
    <property type="gene ID" value="BL0116"/>
</dbReference>
<dbReference type="KEGG" id="blo:BL0116"/>
<dbReference type="PATRIC" id="fig|206672.9.peg.125"/>
<dbReference type="HOGENOM" id="CLU_015515_2_1_11"/>
<dbReference type="OrthoDB" id="9760853at2"/>
<dbReference type="PhylomeDB" id="Q8G7W9"/>
<dbReference type="Proteomes" id="UP000000439">
    <property type="component" value="Chromosome"/>
</dbReference>
<dbReference type="GO" id="GO:0005737">
    <property type="term" value="C:cytoplasm"/>
    <property type="evidence" value="ECO:0007669"/>
    <property type="project" value="UniProtKB-SubCell"/>
</dbReference>
<dbReference type="GO" id="GO:0005524">
    <property type="term" value="F:ATP binding"/>
    <property type="evidence" value="ECO:0007669"/>
    <property type="project" value="UniProtKB-UniRule"/>
</dbReference>
<dbReference type="GO" id="GO:0004820">
    <property type="term" value="F:glycine-tRNA ligase activity"/>
    <property type="evidence" value="ECO:0000250"/>
    <property type="project" value="UniProtKB"/>
</dbReference>
<dbReference type="GO" id="GO:0046983">
    <property type="term" value="F:protein dimerization activity"/>
    <property type="evidence" value="ECO:0000250"/>
    <property type="project" value="UniProtKB"/>
</dbReference>
<dbReference type="GO" id="GO:0006426">
    <property type="term" value="P:glycyl-tRNA aminoacylation"/>
    <property type="evidence" value="ECO:0007669"/>
    <property type="project" value="UniProtKB-UniRule"/>
</dbReference>
<dbReference type="CDD" id="cd00774">
    <property type="entry name" value="GlyRS-like_core"/>
    <property type="match status" value="1"/>
</dbReference>
<dbReference type="CDD" id="cd00858">
    <property type="entry name" value="GlyRS_anticodon"/>
    <property type="match status" value="1"/>
</dbReference>
<dbReference type="FunFam" id="3.40.50.800:FF:000002">
    <property type="entry name" value="Glycine--tRNA ligase"/>
    <property type="match status" value="1"/>
</dbReference>
<dbReference type="Gene3D" id="3.40.50.800">
    <property type="entry name" value="Anticodon-binding domain"/>
    <property type="match status" value="1"/>
</dbReference>
<dbReference type="Gene3D" id="3.30.930.10">
    <property type="entry name" value="Bira Bifunctional Protein, Domain 2"/>
    <property type="match status" value="1"/>
</dbReference>
<dbReference type="HAMAP" id="MF_00253_B">
    <property type="entry name" value="Gly_tRNA_synth_B"/>
    <property type="match status" value="1"/>
</dbReference>
<dbReference type="InterPro" id="IPR002314">
    <property type="entry name" value="aa-tRNA-synt_IIb"/>
</dbReference>
<dbReference type="InterPro" id="IPR006195">
    <property type="entry name" value="aa-tRNA-synth_II"/>
</dbReference>
<dbReference type="InterPro" id="IPR045864">
    <property type="entry name" value="aa-tRNA-synth_II/BPL/LPL"/>
</dbReference>
<dbReference type="InterPro" id="IPR004154">
    <property type="entry name" value="Anticodon-bd"/>
</dbReference>
<dbReference type="InterPro" id="IPR036621">
    <property type="entry name" value="Anticodon-bd_dom_sf"/>
</dbReference>
<dbReference type="InterPro" id="IPR027031">
    <property type="entry name" value="Gly-tRNA_synthase/POLG2"/>
</dbReference>
<dbReference type="InterPro" id="IPR022961">
    <property type="entry name" value="Gly_tRNA_ligase_bac"/>
</dbReference>
<dbReference type="InterPro" id="IPR033731">
    <property type="entry name" value="GlyRS-like_core"/>
</dbReference>
<dbReference type="InterPro" id="IPR002315">
    <property type="entry name" value="tRNA-synt_gly"/>
</dbReference>
<dbReference type="NCBIfam" id="TIGR00389">
    <property type="entry name" value="glyS_dimeric"/>
    <property type="match status" value="1"/>
</dbReference>
<dbReference type="NCBIfam" id="NF003211">
    <property type="entry name" value="PRK04173.1"/>
    <property type="match status" value="1"/>
</dbReference>
<dbReference type="PANTHER" id="PTHR10745:SF8">
    <property type="entry name" value="DNA POLYMERASE SUBUNIT GAMMA-2, MITOCHONDRIAL"/>
    <property type="match status" value="1"/>
</dbReference>
<dbReference type="PANTHER" id="PTHR10745">
    <property type="entry name" value="GLYCYL-TRNA SYNTHETASE/DNA POLYMERASE SUBUNIT GAMMA-2"/>
    <property type="match status" value="1"/>
</dbReference>
<dbReference type="Pfam" id="PF03129">
    <property type="entry name" value="HGTP_anticodon"/>
    <property type="match status" value="1"/>
</dbReference>
<dbReference type="Pfam" id="PF00587">
    <property type="entry name" value="tRNA-synt_2b"/>
    <property type="match status" value="1"/>
</dbReference>
<dbReference type="PRINTS" id="PR01043">
    <property type="entry name" value="TRNASYNTHGLY"/>
</dbReference>
<dbReference type="SUPFAM" id="SSF52954">
    <property type="entry name" value="Class II aaRS ABD-related"/>
    <property type="match status" value="1"/>
</dbReference>
<dbReference type="SUPFAM" id="SSF55681">
    <property type="entry name" value="Class II aaRS and biotin synthetases"/>
    <property type="match status" value="1"/>
</dbReference>
<dbReference type="PROSITE" id="PS50862">
    <property type="entry name" value="AA_TRNA_LIGASE_II"/>
    <property type="match status" value="1"/>
</dbReference>